<accession>P54171</accession>
<name>YPIP_BACSU</name>
<dbReference type="EMBL" id="L77246">
    <property type="protein sequence ID" value="AAA96631.1"/>
    <property type="status" value="ALT_INIT"/>
    <property type="molecule type" value="Genomic_DNA"/>
</dbReference>
<dbReference type="EMBL" id="AL009126">
    <property type="protein sequence ID" value="CAB14103.2"/>
    <property type="molecule type" value="Genomic_DNA"/>
</dbReference>
<dbReference type="PIR" id="H69936">
    <property type="entry name" value="H69936"/>
</dbReference>
<dbReference type="RefSeq" id="WP_003230795.1">
    <property type="nucleotide sequence ID" value="NZ_OZ025638.1"/>
</dbReference>
<dbReference type="SMR" id="P54171"/>
<dbReference type="FunCoup" id="P54171">
    <property type="interactions" value="10"/>
</dbReference>
<dbReference type="STRING" id="224308.BSU21850"/>
<dbReference type="PaxDb" id="224308-BSU21850"/>
<dbReference type="EnsemblBacteria" id="CAB14103">
    <property type="protein sequence ID" value="CAB14103"/>
    <property type="gene ID" value="BSU_21850"/>
</dbReference>
<dbReference type="GeneID" id="939088"/>
<dbReference type="KEGG" id="bsu:BSU21850"/>
<dbReference type="PATRIC" id="fig|224308.179.peg.2387"/>
<dbReference type="eggNOG" id="COG2136">
    <property type="taxonomic scope" value="Bacteria"/>
</dbReference>
<dbReference type="eggNOG" id="COG2521">
    <property type="taxonomic scope" value="Bacteria"/>
</dbReference>
<dbReference type="InParanoid" id="P54171"/>
<dbReference type="OrthoDB" id="1653798at2"/>
<dbReference type="BioCyc" id="BSUB:BSU21850-MONOMER"/>
<dbReference type="Proteomes" id="UP000001570">
    <property type="component" value="Chromosome"/>
</dbReference>
<dbReference type="GO" id="GO:0008990">
    <property type="term" value="F:rRNA (guanine-N2-)-methyltransferase activity"/>
    <property type="evidence" value="ECO:0007669"/>
    <property type="project" value="InterPro"/>
</dbReference>
<dbReference type="CDD" id="cd02440">
    <property type="entry name" value="AdoMet_MTases"/>
    <property type="match status" value="1"/>
</dbReference>
<dbReference type="Gene3D" id="3.40.50.150">
    <property type="entry name" value="Vaccinia Virus protein VP39"/>
    <property type="match status" value="1"/>
</dbReference>
<dbReference type="InterPro" id="IPR007536">
    <property type="entry name" value="16SrRNA_methylTrfase_J"/>
</dbReference>
<dbReference type="InterPro" id="IPR029063">
    <property type="entry name" value="SAM-dependent_MTases_sf"/>
</dbReference>
<dbReference type="PANTHER" id="PTHR36112">
    <property type="entry name" value="RIBOSOMAL RNA SMALL SUBUNIT METHYLTRANSFERASE J"/>
    <property type="match status" value="1"/>
</dbReference>
<dbReference type="PANTHER" id="PTHR36112:SF1">
    <property type="entry name" value="RIBOSOMAL RNA SMALL SUBUNIT METHYLTRANSFERASE J"/>
    <property type="match status" value="1"/>
</dbReference>
<dbReference type="Pfam" id="PF04445">
    <property type="entry name" value="SAM_MT"/>
    <property type="match status" value="1"/>
</dbReference>
<dbReference type="SUPFAM" id="SSF53335">
    <property type="entry name" value="S-adenosyl-L-methionine-dependent methyltransferases"/>
    <property type="match status" value="1"/>
</dbReference>
<organism>
    <name type="scientific">Bacillus subtilis (strain 168)</name>
    <dbReference type="NCBI Taxonomy" id="224308"/>
    <lineage>
        <taxon>Bacteria</taxon>
        <taxon>Bacillati</taxon>
        <taxon>Bacillota</taxon>
        <taxon>Bacilli</taxon>
        <taxon>Bacillales</taxon>
        <taxon>Bacillaceae</taxon>
        <taxon>Bacillus</taxon>
    </lineage>
</organism>
<feature type="chain" id="PRO_0000049701" description="Uncharacterized protein YpiP">
    <location>
        <begin position="1"/>
        <end position="257"/>
    </location>
</feature>
<proteinExistence type="predicted"/>
<gene>
    <name type="primary">ypiP</name>
    <name type="ordered locus">BSU21850</name>
</gene>
<sequence length="257" mass="28954">MITTSYRPSEHTIKTAKQLSKELNMPYCGRNKQTVEHLLKSAERDLLVVGKERFELYTKQGAKFFFHPNTAMFRAKRFLQGEKEPMLRAAGLSEGDTFLDCTLGLGSDAIIASMAVGETGSVVGIEKNHLVSVLVRTGLHSWETGIEELQAAMRRIQVKNGDCFEHIKQLPDNSVDVVYFDPMFHEPVETSDGIAPLRDLAEDSVLHEGCINEAVRVARKSVVLKDHWKSPRFEQFGFNVMKRKTALFHYGVIQTSP</sequence>
<comment type="sequence caution" evidence="1">
    <conflict type="erroneous initiation">
        <sequence resource="EMBL-CDS" id="AAA96631"/>
    </conflict>
</comment>
<evidence type="ECO:0000305" key="1"/>
<keyword id="KW-1185">Reference proteome</keyword>
<protein>
    <recommendedName>
        <fullName>Uncharacterized protein YpiP</fullName>
    </recommendedName>
</protein>
<reference key="1">
    <citation type="journal article" date="1996" name="Microbiology">
        <title>Organization of the Bacillus subtilis 168 chromosome between kdg and the attachment site of the SP beta prophage: use of long accurate PCR and yeast artificial chromosomes for sequencing.</title>
        <authorList>
            <person name="Capuano V."/>
            <person name="Galleron N."/>
            <person name="Pujic P."/>
            <person name="Sorokin A."/>
            <person name="Ehrlich S.D."/>
        </authorList>
    </citation>
    <scope>NUCLEOTIDE SEQUENCE [GENOMIC DNA]</scope>
    <source>
        <strain>168 / Marburg / ATCC 6051 / DSM 10 / JCM 1465 / NBRC 13719 / NCIMB 3610 / NRRL NRS-744 / VKM B-501</strain>
    </source>
</reference>
<reference key="2">
    <citation type="journal article" date="1997" name="Nature">
        <title>The complete genome sequence of the Gram-positive bacterium Bacillus subtilis.</title>
        <authorList>
            <person name="Kunst F."/>
            <person name="Ogasawara N."/>
            <person name="Moszer I."/>
            <person name="Albertini A.M."/>
            <person name="Alloni G."/>
            <person name="Azevedo V."/>
            <person name="Bertero M.G."/>
            <person name="Bessieres P."/>
            <person name="Bolotin A."/>
            <person name="Borchert S."/>
            <person name="Borriss R."/>
            <person name="Boursier L."/>
            <person name="Brans A."/>
            <person name="Braun M."/>
            <person name="Brignell S.C."/>
            <person name="Bron S."/>
            <person name="Brouillet S."/>
            <person name="Bruschi C.V."/>
            <person name="Caldwell B."/>
            <person name="Capuano V."/>
            <person name="Carter N.M."/>
            <person name="Choi S.-K."/>
            <person name="Codani J.-J."/>
            <person name="Connerton I.F."/>
            <person name="Cummings N.J."/>
            <person name="Daniel R.A."/>
            <person name="Denizot F."/>
            <person name="Devine K.M."/>
            <person name="Duesterhoeft A."/>
            <person name="Ehrlich S.D."/>
            <person name="Emmerson P.T."/>
            <person name="Entian K.-D."/>
            <person name="Errington J."/>
            <person name="Fabret C."/>
            <person name="Ferrari E."/>
            <person name="Foulger D."/>
            <person name="Fritz C."/>
            <person name="Fujita M."/>
            <person name="Fujita Y."/>
            <person name="Fuma S."/>
            <person name="Galizzi A."/>
            <person name="Galleron N."/>
            <person name="Ghim S.-Y."/>
            <person name="Glaser P."/>
            <person name="Goffeau A."/>
            <person name="Golightly E.J."/>
            <person name="Grandi G."/>
            <person name="Guiseppi G."/>
            <person name="Guy B.J."/>
            <person name="Haga K."/>
            <person name="Haiech J."/>
            <person name="Harwood C.R."/>
            <person name="Henaut A."/>
            <person name="Hilbert H."/>
            <person name="Holsappel S."/>
            <person name="Hosono S."/>
            <person name="Hullo M.-F."/>
            <person name="Itaya M."/>
            <person name="Jones L.-M."/>
            <person name="Joris B."/>
            <person name="Karamata D."/>
            <person name="Kasahara Y."/>
            <person name="Klaerr-Blanchard M."/>
            <person name="Klein C."/>
            <person name="Kobayashi Y."/>
            <person name="Koetter P."/>
            <person name="Koningstein G."/>
            <person name="Krogh S."/>
            <person name="Kumano M."/>
            <person name="Kurita K."/>
            <person name="Lapidus A."/>
            <person name="Lardinois S."/>
            <person name="Lauber J."/>
            <person name="Lazarevic V."/>
            <person name="Lee S.-M."/>
            <person name="Levine A."/>
            <person name="Liu H."/>
            <person name="Masuda S."/>
            <person name="Mauel C."/>
            <person name="Medigue C."/>
            <person name="Medina N."/>
            <person name="Mellado R.P."/>
            <person name="Mizuno M."/>
            <person name="Moestl D."/>
            <person name="Nakai S."/>
            <person name="Noback M."/>
            <person name="Noone D."/>
            <person name="O'Reilly M."/>
            <person name="Ogawa K."/>
            <person name="Ogiwara A."/>
            <person name="Oudega B."/>
            <person name="Park S.-H."/>
            <person name="Parro V."/>
            <person name="Pohl T.M."/>
            <person name="Portetelle D."/>
            <person name="Porwollik S."/>
            <person name="Prescott A.M."/>
            <person name="Presecan E."/>
            <person name="Pujic P."/>
            <person name="Purnelle B."/>
            <person name="Rapoport G."/>
            <person name="Rey M."/>
            <person name="Reynolds S."/>
            <person name="Rieger M."/>
            <person name="Rivolta C."/>
            <person name="Rocha E."/>
            <person name="Roche B."/>
            <person name="Rose M."/>
            <person name="Sadaie Y."/>
            <person name="Sato T."/>
            <person name="Scanlan E."/>
            <person name="Schleich S."/>
            <person name="Schroeter R."/>
            <person name="Scoffone F."/>
            <person name="Sekiguchi J."/>
            <person name="Sekowska A."/>
            <person name="Seror S.J."/>
            <person name="Serror P."/>
            <person name="Shin B.-S."/>
            <person name="Soldo B."/>
            <person name="Sorokin A."/>
            <person name="Tacconi E."/>
            <person name="Takagi T."/>
            <person name="Takahashi H."/>
            <person name="Takemaru K."/>
            <person name="Takeuchi M."/>
            <person name="Tamakoshi A."/>
            <person name="Tanaka T."/>
            <person name="Terpstra P."/>
            <person name="Tognoni A."/>
            <person name="Tosato V."/>
            <person name="Uchiyama S."/>
            <person name="Vandenbol M."/>
            <person name="Vannier F."/>
            <person name="Vassarotti A."/>
            <person name="Viari A."/>
            <person name="Wambutt R."/>
            <person name="Wedler E."/>
            <person name="Wedler H."/>
            <person name="Weitzenegger T."/>
            <person name="Winters P."/>
            <person name="Wipat A."/>
            <person name="Yamamoto H."/>
            <person name="Yamane K."/>
            <person name="Yasumoto K."/>
            <person name="Yata K."/>
            <person name="Yoshida K."/>
            <person name="Yoshikawa H.-F."/>
            <person name="Zumstein E."/>
            <person name="Yoshikawa H."/>
            <person name="Danchin A."/>
        </authorList>
    </citation>
    <scope>NUCLEOTIDE SEQUENCE [LARGE SCALE GENOMIC DNA]</scope>
    <source>
        <strain>168</strain>
    </source>
</reference>